<evidence type="ECO:0000255" key="1">
    <source>
        <dbReference type="HAMAP-Rule" id="MF_00440"/>
    </source>
</evidence>
<reference key="1">
    <citation type="submission" date="2008-01" db="EMBL/GenBank/DDBJ databases">
        <title>Complete sequence of chromosome of Caulobacter sp. K31.</title>
        <authorList>
            <consortium name="US DOE Joint Genome Institute"/>
            <person name="Copeland A."/>
            <person name="Lucas S."/>
            <person name="Lapidus A."/>
            <person name="Barry K."/>
            <person name="Glavina del Rio T."/>
            <person name="Dalin E."/>
            <person name="Tice H."/>
            <person name="Pitluck S."/>
            <person name="Bruce D."/>
            <person name="Goodwin L."/>
            <person name="Thompson L.S."/>
            <person name="Brettin T."/>
            <person name="Detter J.C."/>
            <person name="Han C."/>
            <person name="Schmutz J."/>
            <person name="Larimer F."/>
            <person name="Land M."/>
            <person name="Hauser L."/>
            <person name="Kyrpides N."/>
            <person name="Kim E."/>
            <person name="Stephens C."/>
            <person name="Richardson P."/>
        </authorList>
    </citation>
    <scope>NUCLEOTIDE SEQUENCE [LARGE SCALE GENOMIC DNA]</scope>
    <source>
        <strain>K31</strain>
    </source>
</reference>
<gene>
    <name evidence="1" type="primary">nrdR</name>
    <name type="ordered locus">Caul_3046</name>
</gene>
<dbReference type="EMBL" id="CP000927">
    <property type="protein sequence ID" value="ABZ72173.1"/>
    <property type="molecule type" value="Genomic_DNA"/>
</dbReference>
<dbReference type="SMR" id="B0T1I4"/>
<dbReference type="STRING" id="366602.Caul_3046"/>
<dbReference type="KEGG" id="cak:Caul_3046"/>
<dbReference type="eggNOG" id="COG1327">
    <property type="taxonomic scope" value="Bacteria"/>
</dbReference>
<dbReference type="HOGENOM" id="CLU_108412_0_1_5"/>
<dbReference type="OrthoDB" id="9807461at2"/>
<dbReference type="GO" id="GO:0005524">
    <property type="term" value="F:ATP binding"/>
    <property type="evidence" value="ECO:0007669"/>
    <property type="project" value="UniProtKB-KW"/>
</dbReference>
<dbReference type="GO" id="GO:0003677">
    <property type="term" value="F:DNA binding"/>
    <property type="evidence" value="ECO:0007669"/>
    <property type="project" value="UniProtKB-KW"/>
</dbReference>
<dbReference type="GO" id="GO:0008270">
    <property type="term" value="F:zinc ion binding"/>
    <property type="evidence" value="ECO:0007669"/>
    <property type="project" value="UniProtKB-UniRule"/>
</dbReference>
<dbReference type="GO" id="GO:0045892">
    <property type="term" value="P:negative regulation of DNA-templated transcription"/>
    <property type="evidence" value="ECO:0007669"/>
    <property type="project" value="UniProtKB-UniRule"/>
</dbReference>
<dbReference type="HAMAP" id="MF_00440">
    <property type="entry name" value="NrdR"/>
    <property type="match status" value="1"/>
</dbReference>
<dbReference type="InterPro" id="IPR005144">
    <property type="entry name" value="ATP-cone_dom"/>
</dbReference>
<dbReference type="InterPro" id="IPR055173">
    <property type="entry name" value="NrdR-like_N"/>
</dbReference>
<dbReference type="InterPro" id="IPR003796">
    <property type="entry name" value="RNR_NrdR-like"/>
</dbReference>
<dbReference type="NCBIfam" id="TIGR00244">
    <property type="entry name" value="transcriptional regulator NrdR"/>
    <property type="match status" value="1"/>
</dbReference>
<dbReference type="PANTHER" id="PTHR30455">
    <property type="entry name" value="TRANSCRIPTIONAL REPRESSOR NRDR"/>
    <property type="match status" value="1"/>
</dbReference>
<dbReference type="PANTHER" id="PTHR30455:SF2">
    <property type="entry name" value="TRANSCRIPTIONAL REPRESSOR NRDR"/>
    <property type="match status" value="1"/>
</dbReference>
<dbReference type="Pfam" id="PF03477">
    <property type="entry name" value="ATP-cone"/>
    <property type="match status" value="1"/>
</dbReference>
<dbReference type="Pfam" id="PF22811">
    <property type="entry name" value="Zn_ribbon_NrdR"/>
    <property type="match status" value="1"/>
</dbReference>
<dbReference type="PROSITE" id="PS51161">
    <property type="entry name" value="ATP_CONE"/>
    <property type="match status" value="1"/>
</dbReference>
<keyword id="KW-0067">ATP-binding</keyword>
<keyword id="KW-0238">DNA-binding</keyword>
<keyword id="KW-0479">Metal-binding</keyword>
<keyword id="KW-0547">Nucleotide-binding</keyword>
<keyword id="KW-0678">Repressor</keyword>
<keyword id="KW-0804">Transcription</keyword>
<keyword id="KW-0805">Transcription regulation</keyword>
<keyword id="KW-0862">Zinc</keyword>
<keyword id="KW-0863">Zinc-finger</keyword>
<feature type="chain" id="PRO_1000080729" description="Transcriptional repressor NrdR">
    <location>
        <begin position="1"/>
        <end position="157"/>
    </location>
</feature>
<feature type="domain" description="ATP-cone" evidence="1">
    <location>
        <begin position="49"/>
        <end position="139"/>
    </location>
</feature>
<feature type="zinc finger region" evidence="1">
    <location>
        <begin position="3"/>
        <end position="34"/>
    </location>
</feature>
<name>NRDR_CAUSK</name>
<comment type="function">
    <text evidence="1">Negatively regulates transcription of bacterial ribonucleotide reductase nrd genes and operons by binding to NrdR-boxes.</text>
</comment>
<comment type="cofactor">
    <cofactor evidence="1">
        <name>Zn(2+)</name>
        <dbReference type="ChEBI" id="CHEBI:29105"/>
    </cofactor>
    <text evidence="1">Binds 1 zinc ion.</text>
</comment>
<comment type="similarity">
    <text evidence="1">Belongs to the NrdR family.</text>
</comment>
<protein>
    <recommendedName>
        <fullName evidence="1">Transcriptional repressor NrdR</fullName>
    </recommendedName>
</protein>
<proteinExistence type="inferred from homology"/>
<organism>
    <name type="scientific">Caulobacter sp. (strain K31)</name>
    <dbReference type="NCBI Taxonomy" id="366602"/>
    <lineage>
        <taxon>Bacteria</taxon>
        <taxon>Pseudomonadati</taxon>
        <taxon>Pseudomonadota</taxon>
        <taxon>Alphaproteobacteria</taxon>
        <taxon>Caulobacterales</taxon>
        <taxon>Caulobacteraceae</taxon>
        <taxon>Caulobacter</taxon>
    </lineage>
</organism>
<accession>B0T1I4</accession>
<sequence>MRCPFCGHMESQVKDSRPSEDGAAIRRRRLCPECGGRFTTFERVQLRELTIVKRSGRRSPFDREKLVRSISIATRKRPVDPERVERMVNGIVRQLESQGETELPSSAVGEMVMKALKSLDDVAYVRYASVYRDFRETSDFAKFLGAEGLSDVADDEL</sequence>